<gene>
    <name evidence="1" type="primary">tsf</name>
    <name type="ordered locus">BceJ2315_20520</name>
    <name type="ORF">BCAL2090</name>
</gene>
<protein>
    <recommendedName>
        <fullName evidence="1">Elongation factor Ts</fullName>
        <shortName evidence="1">EF-Ts</shortName>
    </recommendedName>
</protein>
<organism>
    <name type="scientific">Burkholderia cenocepacia (strain ATCC BAA-245 / DSM 16553 / LMG 16656 / NCTC 13227 / J2315 / CF5610)</name>
    <name type="common">Burkholderia cepacia (strain J2315)</name>
    <dbReference type="NCBI Taxonomy" id="216591"/>
    <lineage>
        <taxon>Bacteria</taxon>
        <taxon>Pseudomonadati</taxon>
        <taxon>Pseudomonadota</taxon>
        <taxon>Betaproteobacteria</taxon>
        <taxon>Burkholderiales</taxon>
        <taxon>Burkholderiaceae</taxon>
        <taxon>Burkholderia</taxon>
        <taxon>Burkholderia cepacia complex</taxon>
    </lineage>
</organism>
<dbReference type="EMBL" id="AM747720">
    <property type="protein sequence ID" value="CAR52390.1"/>
    <property type="molecule type" value="Genomic_DNA"/>
</dbReference>
<dbReference type="RefSeq" id="WP_006483826.1">
    <property type="nucleotide sequence ID" value="NC_011000.1"/>
</dbReference>
<dbReference type="SMR" id="B4ECN0"/>
<dbReference type="GeneID" id="56558580"/>
<dbReference type="KEGG" id="bcj:BCAL2090"/>
<dbReference type="eggNOG" id="COG0264">
    <property type="taxonomic scope" value="Bacteria"/>
</dbReference>
<dbReference type="HOGENOM" id="CLU_047155_0_2_4"/>
<dbReference type="BioCyc" id="BCEN216591:G1G1V-2290-MONOMER"/>
<dbReference type="Proteomes" id="UP000001035">
    <property type="component" value="Chromosome 1"/>
</dbReference>
<dbReference type="GO" id="GO:0005737">
    <property type="term" value="C:cytoplasm"/>
    <property type="evidence" value="ECO:0007669"/>
    <property type="project" value="UniProtKB-SubCell"/>
</dbReference>
<dbReference type="GO" id="GO:0003746">
    <property type="term" value="F:translation elongation factor activity"/>
    <property type="evidence" value="ECO:0007669"/>
    <property type="project" value="UniProtKB-UniRule"/>
</dbReference>
<dbReference type="CDD" id="cd14275">
    <property type="entry name" value="UBA_EF-Ts"/>
    <property type="match status" value="1"/>
</dbReference>
<dbReference type="FunFam" id="1.10.286.20:FF:000001">
    <property type="entry name" value="Elongation factor Ts"/>
    <property type="match status" value="1"/>
</dbReference>
<dbReference type="FunFam" id="1.10.8.10:FF:000001">
    <property type="entry name" value="Elongation factor Ts"/>
    <property type="match status" value="1"/>
</dbReference>
<dbReference type="Gene3D" id="1.10.286.20">
    <property type="match status" value="1"/>
</dbReference>
<dbReference type="Gene3D" id="1.10.8.10">
    <property type="entry name" value="DNA helicase RuvA subunit, C-terminal domain"/>
    <property type="match status" value="1"/>
</dbReference>
<dbReference type="Gene3D" id="3.30.479.20">
    <property type="entry name" value="Elongation factor Ts, dimerisation domain"/>
    <property type="match status" value="2"/>
</dbReference>
<dbReference type="HAMAP" id="MF_00050">
    <property type="entry name" value="EF_Ts"/>
    <property type="match status" value="1"/>
</dbReference>
<dbReference type="InterPro" id="IPR036402">
    <property type="entry name" value="EF-Ts_dimer_sf"/>
</dbReference>
<dbReference type="InterPro" id="IPR001816">
    <property type="entry name" value="Transl_elong_EFTs/EF1B"/>
</dbReference>
<dbReference type="InterPro" id="IPR014039">
    <property type="entry name" value="Transl_elong_EFTs/EF1B_dimer"/>
</dbReference>
<dbReference type="InterPro" id="IPR018101">
    <property type="entry name" value="Transl_elong_Ts_CS"/>
</dbReference>
<dbReference type="InterPro" id="IPR009060">
    <property type="entry name" value="UBA-like_sf"/>
</dbReference>
<dbReference type="NCBIfam" id="TIGR00116">
    <property type="entry name" value="tsf"/>
    <property type="match status" value="1"/>
</dbReference>
<dbReference type="PANTHER" id="PTHR11741">
    <property type="entry name" value="ELONGATION FACTOR TS"/>
    <property type="match status" value="1"/>
</dbReference>
<dbReference type="PANTHER" id="PTHR11741:SF0">
    <property type="entry name" value="ELONGATION FACTOR TS, MITOCHONDRIAL"/>
    <property type="match status" value="1"/>
</dbReference>
<dbReference type="Pfam" id="PF00889">
    <property type="entry name" value="EF_TS"/>
    <property type="match status" value="1"/>
</dbReference>
<dbReference type="SUPFAM" id="SSF54713">
    <property type="entry name" value="Elongation factor Ts (EF-Ts), dimerisation domain"/>
    <property type="match status" value="2"/>
</dbReference>
<dbReference type="SUPFAM" id="SSF46934">
    <property type="entry name" value="UBA-like"/>
    <property type="match status" value="1"/>
</dbReference>
<dbReference type="PROSITE" id="PS01127">
    <property type="entry name" value="EF_TS_2"/>
    <property type="match status" value="1"/>
</dbReference>
<keyword id="KW-0963">Cytoplasm</keyword>
<keyword id="KW-0251">Elongation factor</keyword>
<keyword id="KW-0648">Protein biosynthesis</keyword>
<sequence length="293" mass="30994">MAAITASMVAELRAKTDAPMMECKKALTEADGDLAKAEELLRVKLGNKASKAASRVTAEGVVASFVGGNAGALVELNCETDFVAKNDDFLAFSKTVAELVATQNPADVAALSALPLDGSTVDAVRLALIGKIGENVSIRRFVRFETANKIATYLHGARIGVIVEYTGADEQVGKDVAMHIAAMKPVALSSADVPAELIETERRVAEQKAAESGKPAEIVAKMVDGSVQKYLKEVSLLNQTFVKNDKQTIEQMLKAANAAVQKFALFVVGEGIEKRQDDFAAEVAAQVAAAKQQ</sequence>
<feature type="chain" id="PRO_1000116703" description="Elongation factor Ts">
    <location>
        <begin position="1"/>
        <end position="293"/>
    </location>
</feature>
<feature type="region of interest" description="Involved in Mg(2+) ion dislocation from EF-Tu" evidence="1">
    <location>
        <begin position="80"/>
        <end position="83"/>
    </location>
</feature>
<reference key="1">
    <citation type="journal article" date="2009" name="J. Bacteriol.">
        <title>The genome of Burkholderia cenocepacia J2315, an epidemic pathogen of cystic fibrosis patients.</title>
        <authorList>
            <person name="Holden M.T."/>
            <person name="Seth-Smith H.M."/>
            <person name="Crossman L.C."/>
            <person name="Sebaihia M."/>
            <person name="Bentley S.D."/>
            <person name="Cerdeno-Tarraga A.M."/>
            <person name="Thomson N.R."/>
            <person name="Bason N."/>
            <person name="Quail M.A."/>
            <person name="Sharp S."/>
            <person name="Cherevach I."/>
            <person name="Churcher C."/>
            <person name="Goodhead I."/>
            <person name="Hauser H."/>
            <person name="Holroyd N."/>
            <person name="Mungall K."/>
            <person name="Scott P."/>
            <person name="Walker D."/>
            <person name="White B."/>
            <person name="Rose H."/>
            <person name="Iversen P."/>
            <person name="Mil-Homens D."/>
            <person name="Rocha E.P."/>
            <person name="Fialho A.M."/>
            <person name="Baldwin A."/>
            <person name="Dowson C."/>
            <person name="Barrell B.G."/>
            <person name="Govan J.R."/>
            <person name="Vandamme P."/>
            <person name="Hart C.A."/>
            <person name="Mahenthiralingam E."/>
            <person name="Parkhill J."/>
        </authorList>
    </citation>
    <scope>NUCLEOTIDE SEQUENCE [LARGE SCALE GENOMIC DNA]</scope>
    <source>
        <strain>ATCC BAA-245 / DSM 16553 / LMG 16656 / NCTC 13227 / J2315 / CF5610</strain>
    </source>
</reference>
<name>EFTS_BURCJ</name>
<evidence type="ECO:0000255" key="1">
    <source>
        <dbReference type="HAMAP-Rule" id="MF_00050"/>
    </source>
</evidence>
<proteinExistence type="inferred from homology"/>
<accession>B4ECN0</accession>
<comment type="function">
    <text evidence="1">Associates with the EF-Tu.GDP complex and induces the exchange of GDP to GTP. It remains bound to the aminoacyl-tRNA.EF-Tu.GTP complex up to the GTP hydrolysis stage on the ribosome.</text>
</comment>
<comment type="subcellular location">
    <subcellularLocation>
        <location evidence="1">Cytoplasm</location>
    </subcellularLocation>
</comment>
<comment type="similarity">
    <text evidence="1">Belongs to the EF-Ts family.</text>
</comment>